<sequence length="136" mass="15508">MVKIRLKRAGRKKMPVYQIVVADSRSPRDGKFLEVVGHYQPTLKPHSITLKKDRVEYWMHCGAQPTATVNSLIRATGLLYELRMKKLGRSEADIATEMEKWEAAQMARREKRVTLKARRRRAKKEAEAASASSAEG</sequence>
<evidence type="ECO:0000255" key="1">
    <source>
        <dbReference type="HAMAP-Rule" id="MF_00385"/>
    </source>
</evidence>
<evidence type="ECO:0000256" key="2">
    <source>
        <dbReference type="SAM" id="MobiDB-lite"/>
    </source>
</evidence>
<evidence type="ECO:0000305" key="3"/>
<feature type="chain" id="PRO_0000243795" description="Small ribosomal subunit protein bS16">
    <location>
        <begin position="1"/>
        <end position="136"/>
    </location>
</feature>
<feature type="region of interest" description="Disordered" evidence="2">
    <location>
        <begin position="114"/>
        <end position="136"/>
    </location>
</feature>
<feature type="compositionally biased region" description="Basic residues" evidence="2">
    <location>
        <begin position="114"/>
        <end position="123"/>
    </location>
</feature>
<accession>Q3ASF5</accession>
<proteinExistence type="inferred from homology"/>
<gene>
    <name evidence="1" type="primary">rpsP</name>
    <name type="ordered locus">Cag_0804</name>
</gene>
<organism>
    <name type="scientific">Chlorobium chlorochromatii (strain CaD3)</name>
    <dbReference type="NCBI Taxonomy" id="340177"/>
    <lineage>
        <taxon>Bacteria</taxon>
        <taxon>Pseudomonadati</taxon>
        <taxon>Chlorobiota</taxon>
        <taxon>Chlorobiia</taxon>
        <taxon>Chlorobiales</taxon>
        <taxon>Chlorobiaceae</taxon>
        <taxon>Chlorobium/Pelodictyon group</taxon>
        <taxon>Chlorobium</taxon>
    </lineage>
</organism>
<protein>
    <recommendedName>
        <fullName evidence="1">Small ribosomal subunit protein bS16</fullName>
    </recommendedName>
    <alternativeName>
        <fullName evidence="3">30S ribosomal protein S16</fullName>
    </alternativeName>
</protein>
<comment type="similarity">
    <text evidence="1">Belongs to the bacterial ribosomal protein bS16 family.</text>
</comment>
<name>RS16_CHLCH</name>
<keyword id="KW-0687">Ribonucleoprotein</keyword>
<keyword id="KW-0689">Ribosomal protein</keyword>
<dbReference type="EMBL" id="CP000108">
    <property type="protein sequence ID" value="ABB28070.1"/>
    <property type="molecule type" value="Genomic_DNA"/>
</dbReference>
<dbReference type="SMR" id="Q3ASF5"/>
<dbReference type="STRING" id="340177.Cag_0804"/>
<dbReference type="KEGG" id="cch:Cag_0804"/>
<dbReference type="eggNOG" id="COG0228">
    <property type="taxonomic scope" value="Bacteria"/>
</dbReference>
<dbReference type="HOGENOM" id="CLU_100590_3_2_10"/>
<dbReference type="OrthoDB" id="9807878at2"/>
<dbReference type="GO" id="GO:0005737">
    <property type="term" value="C:cytoplasm"/>
    <property type="evidence" value="ECO:0007669"/>
    <property type="project" value="UniProtKB-ARBA"/>
</dbReference>
<dbReference type="GO" id="GO:0015935">
    <property type="term" value="C:small ribosomal subunit"/>
    <property type="evidence" value="ECO:0007669"/>
    <property type="project" value="TreeGrafter"/>
</dbReference>
<dbReference type="GO" id="GO:0003735">
    <property type="term" value="F:structural constituent of ribosome"/>
    <property type="evidence" value="ECO:0007669"/>
    <property type="project" value="InterPro"/>
</dbReference>
<dbReference type="GO" id="GO:0006412">
    <property type="term" value="P:translation"/>
    <property type="evidence" value="ECO:0007669"/>
    <property type="project" value="UniProtKB-UniRule"/>
</dbReference>
<dbReference type="Gene3D" id="3.30.1320.10">
    <property type="match status" value="1"/>
</dbReference>
<dbReference type="HAMAP" id="MF_00385">
    <property type="entry name" value="Ribosomal_bS16"/>
    <property type="match status" value="1"/>
</dbReference>
<dbReference type="InterPro" id="IPR000307">
    <property type="entry name" value="Ribosomal_bS16"/>
</dbReference>
<dbReference type="InterPro" id="IPR020592">
    <property type="entry name" value="Ribosomal_bS16_CS"/>
</dbReference>
<dbReference type="InterPro" id="IPR023803">
    <property type="entry name" value="Ribosomal_bS16_dom_sf"/>
</dbReference>
<dbReference type="NCBIfam" id="TIGR00002">
    <property type="entry name" value="S16"/>
    <property type="match status" value="1"/>
</dbReference>
<dbReference type="PANTHER" id="PTHR12919">
    <property type="entry name" value="30S RIBOSOMAL PROTEIN S16"/>
    <property type="match status" value="1"/>
</dbReference>
<dbReference type="PANTHER" id="PTHR12919:SF20">
    <property type="entry name" value="SMALL RIBOSOMAL SUBUNIT PROTEIN BS16M"/>
    <property type="match status" value="1"/>
</dbReference>
<dbReference type="Pfam" id="PF00886">
    <property type="entry name" value="Ribosomal_S16"/>
    <property type="match status" value="1"/>
</dbReference>
<dbReference type="SUPFAM" id="SSF54565">
    <property type="entry name" value="Ribosomal protein S16"/>
    <property type="match status" value="1"/>
</dbReference>
<dbReference type="PROSITE" id="PS00732">
    <property type="entry name" value="RIBOSOMAL_S16"/>
    <property type="match status" value="1"/>
</dbReference>
<reference key="1">
    <citation type="submission" date="2005-08" db="EMBL/GenBank/DDBJ databases">
        <title>Complete sequence of Chlorobium chlorochromatii CaD3.</title>
        <authorList>
            <consortium name="US DOE Joint Genome Institute"/>
            <person name="Copeland A."/>
            <person name="Lucas S."/>
            <person name="Lapidus A."/>
            <person name="Barry K."/>
            <person name="Detter J.C."/>
            <person name="Glavina T."/>
            <person name="Hammon N."/>
            <person name="Israni S."/>
            <person name="Pitluck S."/>
            <person name="Bryant D."/>
            <person name="Schmutz J."/>
            <person name="Larimer F."/>
            <person name="Land M."/>
            <person name="Kyrpides N."/>
            <person name="Ivanova N."/>
            <person name="Richardson P."/>
        </authorList>
    </citation>
    <scope>NUCLEOTIDE SEQUENCE [LARGE SCALE GENOMIC DNA]</scope>
    <source>
        <strain>CaD3</strain>
    </source>
</reference>